<protein>
    <recommendedName>
        <fullName evidence="1">3-isopropylmalate dehydratase small subunit</fullName>
        <ecNumber evidence="1">4.2.1.33</ecNumber>
    </recommendedName>
    <alternativeName>
        <fullName evidence="1">Alpha-IPM isomerase</fullName>
        <shortName evidence="1">IPMI</shortName>
    </alternativeName>
    <alternativeName>
        <fullName evidence="1">Isopropylmalate isomerase</fullName>
    </alternativeName>
</protein>
<feature type="chain" id="PRO_1000063809" description="3-isopropylmalate dehydratase small subunit">
    <location>
        <begin position="1"/>
        <end position="215"/>
    </location>
</feature>
<keyword id="KW-0028">Amino-acid biosynthesis</keyword>
<keyword id="KW-0100">Branched-chain amino acid biosynthesis</keyword>
<keyword id="KW-0432">Leucine biosynthesis</keyword>
<keyword id="KW-0456">Lyase</keyword>
<keyword id="KW-1185">Reference proteome</keyword>
<dbReference type="EC" id="4.2.1.33" evidence="1"/>
<dbReference type="EMBL" id="CP000304">
    <property type="protein sequence ID" value="ABP79449.1"/>
    <property type="molecule type" value="Genomic_DNA"/>
</dbReference>
<dbReference type="RefSeq" id="WP_011912926.1">
    <property type="nucleotide sequence ID" value="NC_009434.1"/>
</dbReference>
<dbReference type="SMR" id="A4VKE8"/>
<dbReference type="KEGG" id="psa:PST_1773"/>
<dbReference type="eggNOG" id="COG0066">
    <property type="taxonomic scope" value="Bacteria"/>
</dbReference>
<dbReference type="HOGENOM" id="CLU_081378_0_3_6"/>
<dbReference type="UniPathway" id="UPA00048">
    <property type="reaction ID" value="UER00071"/>
</dbReference>
<dbReference type="Proteomes" id="UP000000233">
    <property type="component" value="Chromosome"/>
</dbReference>
<dbReference type="GO" id="GO:0009316">
    <property type="term" value="C:3-isopropylmalate dehydratase complex"/>
    <property type="evidence" value="ECO:0007669"/>
    <property type="project" value="InterPro"/>
</dbReference>
<dbReference type="GO" id="GO:0003861">
    <property type="term" value="F:3-isopropylmalate dehydratase activity"/>
    <property type="evidence" value="ECO:0007669"/>
    <property type="project" value="UniProtKB-UniRule"/>
</dbReference>
<dbReference type="GO" id="GO:0009098">
    <property type="term" value="P:L-leucine biosynthetic process"/>
    <property type="evidence" value="ECO:0007669"/>
    <property type="project" value="UniProtKB-UniRule"/>
</dbReference>
<dbReference type="CDD" id="cd01577">
    <property type="entry name" value="IPMI_Swivel"/>
    <property type="match status" value="1"/>
</dbReference>
<dbReference type="FunFam" id="3.20.19.10:FF:000003">
    <property type="entry name" value="3-isopropylmalate dehydratase small subunit"/>
    <property type="match status" value="1"/>
</dbReference>
<dbReference type="Gene3D" id="3.20.19.10">
    <property type="entry name" value="Aconitase, domain 4"/>
    <property type="match status" value="1"/>
</dbReference>
<dbReference type="HAMAP" id="MF_01031">
    <property type="entry name" value="LeuD_type1"/>
    <property type="match status" value="1"/>
</dbReference>
<dbReference type="InterPro" id="IPR004431">
    <property type="entry name" value="3-IsopropMal_deHydase_ssu"/>
</dbReference>
<dbReference type="InterPro" id="IPR015928">
    <property type="entry name" value="Aconitase/3IPM_dehydase_swvl"/>
</dbReference>
<dbReference type="InterPro" id="IPR000573">
    <property type="entry name" value="AconitaseA/IPMdHydase_ssu_swvl"/>
</dbReference>
<dbReference type="InterPro" id="IPR033940">
    <property type="entry name" value="IPMI_Swivel"/>
</dbReference>
<dbReference type="InterPro" id="IPR050075">
    <property type="entry name" value="LeuD"/>
</dbReference>
<dbReference type="NCBIfam" id="TIGR00171">
    <property type="entry name" value="leuD"/>
    <property type="match status" value="1"/>
</dbReference>
<dbReference type="NCBIfam" id="NF002458">
    <property type="entry name" value="PRK01641.1"/>
    <property type="match status" value="1"/>
</dbReference>
<dbReference type="PANTHER" id="PTHR43345:SF5">
    <property type="entry name" value="3-ISOPROPYLMALATE DEHYDRATASE SMALL SUBUNIT"/>
    <property type="match status" value="1"/>
</dbReference>
<dbReference type="PANTHER" id="PTHR43345">
    <property type="entry name" value="3-ISOPROPYLMALATE DEHYDRATASE SMALL SUBUNIT 2-RELATED-RELATED"/>
    <property type="match status" value="1"/>
</dbReference>
<dbReference type="Pfam" id="PF00694">
    <property type="entry name" value="Aconitase_C"/>
    <property type="match status" value="1"/>
</dbReference>
<dbReference type="SUPFAM" id="SSF52016">
    <property type="entry name" value="LeuD/IlvD-like"/>
    <property type="match status" value="1"/>
</dbReference>
<accession>A4VKE8</accession>
<organism>
    <name type="scientific">Stutzerimonas stutzeri (strain A1501)</name>
    <name type="common">Pseudomonas stutzeri</name>
    <dbReference type="NCBI Taxonomy" id="379731"/>
    <lineage>
        <taxon>Bacteria</taxon>
        <taxon>Pseudomonadati</taxon>
        <taxon>Pseudomonadota</taxon>
        <taxon>Gammaproteobacteria</taxon>
        <taxon>Pseudomonadales</taxon>
        <taxon>Pseudomonadaceae</taxon>
        <taxon>Stutzerimonas</taxon>
    </lineage>
</organism>
<gene>
    <name evidence="1" type="primary">leuD</name>
    <name type="ordered locus">PST_1773</name>
</gene>
<comment type="function">
    <text evidence="1">Catalyzes the isomerization between 2-isopropylmalate and 3-isopropylmalate, via the formation of 2-isopropylmaleate.</text>
</comment>
<comment type="catalytic activity">
    <reaction evidence="1">
        <text>(2R,3S)-3-isopropylmalate = (2S)-2-isopropylmalate</text>
        <dbReference type="Rhea" id="RHEA:32287"/>
        <dbReference type="ChEBI" id="CHEBI:1178"/>
        <dbReference type="ChEBI" id="CHEBI:35121"/>
        <dbReference type="EC" id="4.2.1.33"/>
    </reaction>
</comment>
<comment type="pathway">
    <text evidence="1">Amino-acid biosynthesis; L-leucine biosynthesis; L-leucine from 3-methyl-2-oxobutanoate: step 2/4.</text>
</comment>
<comment type="subunit">
    <text evidence="1">Heterodimer of LeuC and LeuD.</text>
</comment>
<comment type="similarity">
    <text evidence="1">Belongs to the LeuD family. LeuD type 1 subfamily.</text>
</comment>
<sequence>MKAFTQHTGLVCPLDRANVDTDQIIPKQFLKSIKRTGFGPNLFDEWRYLDVGQPNQDCSQRPLNKDFVLNFPRYQGASVLLARENFGCGSSREHAPWALEEYGFRAIIAPSFADIFYNNSFKNGLLPIVLKEEEVDELFQQAEATEGYQLTVDLAAQTVTRPDGKQYGFEVDAFRKHCLLNGLDDIGLTLQDAEAIKAFEVRHQQSQPWLFGAIK</sequence>
<evidence type="ECO:0000255" key="1">
    <source>
        <dbReference type="HAMAP-Rule" id="MF_01031"/>
    </source>
</evidence>
<name>LEUD_STUS1</name>
<proteinExistence type="inferred from homology"/>
<reference key="1">
    <citation type="journal article" date="2008" name="Proc. Natl. Acad. Sci. U.S.A.">
        <title>Nitrogen fixation island and rhizosphere competence traits in the genome of root-associated Pseudomonas stutzeri A1501.</title>
        <authorList>
            <person name="Yan Y."/>
            <person name="Yang J."/>
            <person name="Dou Y."/>
            <person name="Chen M."/>
            <person name="Ping S."/>
            <person name="Peng J."/>
            <person name="Lu W."/>
            <person name="Zhang W."/>
            <person name="Yao Z."/>
            <person name="Li H."/>
            <person name="Liu W."/>
            <person name="He S."/>
            <person name="Geng L."/>
            <person name="Zhang X."/>
            <person name="Yang F."/>
            <person name="Yu H."/>
            <person name="Zhan Y."/>
            <person name="Li D."/>
            <person name="Lin Z."/>
            <person name="Wang Y."/>
            <person name="Elmerich C."/>
            <person name="Lin M."/>
            <person name="Jin Q."/>
        </authorList>
    </citation>
    <scope>NUCLEOTIDE SEQUENCE [LARGE SCALE GENOMIC DNA]</scope>
    <source>
        <strain>A1501</strain>
    </source>
</reference>